<name>Y4445_ARATH</name>
<gene>
    <name type="ordered locus">At4g14450</name>
    <name type="ORF">dl3265w</name>
    <name type="ORF">FCAALL.213</name>
</gene>
<proteinExistence type="evidence at transcript level"/>
<evidence type="ECO:0000255" key="1"/>
<evidence type="ECO:0000305" key="2"/>
<reference key="1">
    <citation type="journal article" date="1998" name="Nature">
        <title>Analysis of 1.9 Mb of contiguous sequence from chromosome 4 of Arabidopsis thaliana.</title>
        <authorList>
            <person name="Bevan M."/>
            <person name="Bancroft I."/>
            <person name="Bent E."/>
            <person name="Love K."/>
            <person name="Goodman H.M."/>
            <person name="Dean C."/>
            <person name="Bergkamp R."/>
            <person name="Dirkse W."/>
            <person name="van Staveren M."/>
            <person name="Stiekema W."/>
            <person name="Drost L."/>
            <person name="Ridley P."/>
            <person name="Hudson S.-A."/>
            <person name="Patel K."/>
            <person name="Murphy G."/>
            <person name="Piffanelli P."/>
            <person name="Wedler H."/>
            <person name="Wedler E."/>
            <person name="Wambutt R."/>
            <person name="Weitzenegger T."/>
            <person name="Pohl T."/>
            <person name="Terryn N."/>
            <person name="Gielen J."/>
            <person name="Villarroel R."/>
            <person name="De Clercq R."/>
            <person name="van Montagu M."/>
            <person name="Lecharny A."/>
            <person name="Aubourg S."/>
            <person name="Gy I."/>
            <person name="Kreis M."/>
            <person name="Lao N."/>
            <person name="Kavanagh T."/>
            <person name="Hempel S."/>
            <person name="Kotter P."/>
            <person name="Entian K.-D."/>
            <person name="Rieger M."/>
            <person name="Schaefer M."/>
            <person name="Funk B."/>
            <person name="Mueller-Auer S."/>
            <person name="Silvey M."/>
            <person name="James R."/>
            <person name="Monfort A."/>
            <person name="Pons A."/>
            <person name="Puigdomenech P."/>
            <person name="Douka A."/>
            <person name="Voukelatou E."/>
            <person name="Milioni D."/>
            <person name="Hatzopoulos P."/>
            <person name="Piravandi E."/>
            <person name="Obermaier B."/>
            <person name="Hilbert H."/>
            <person name="Duesterhoeft A."/>
            <person name="Moores T."/>
            <person name="Jones J.D.G."/>
            <person name="Eneva T."/>
            <person name="Palme K."/>
            <person name="Benes V."/>
            <person name="Rechmann S."/>
            <person name="Ansorge W."/>
            <person name="Cooke R."/>
            <person name="Berger C."/>
            <person name="Delseny M."/>
            <person name="Voet M."/>
            <person name="Volckaert G."/>
            <person name="Mewes H.-W."/>
            <person name="Klosterman S."/>
            <person name="Schueller C."/>
            <person name="Chalwatzis N."/>
        </authorList>
    </citation>
    <scope>NUCLEOTIDE SEQUENCE [LARGE SCALE GENOMIC DNA]</scope>
    <source>
        <strain>cv. Columbia</strain>
    </source>
</reference>
<reference key="2">
    <citation type="journal article" date="1999" name="Nature">
        <title>Sequence and analysis of chromosome 4 of the plant Arabidopsis thaliana.</title>
        <authorList>
            <person name="Mayer K.F.X."/>
            <person name="Schueller C."/>
            <person name="Wambutt R."/>
            <person name="Murphy G."/>
            <person name="Volckaert G."/>
            <person name="Pohl T."/>
            <person name="Duesterhoeft A."/>
            <person name="Stiekema W."/>
            <person name="Entian K.-D."/>
            <person name="Terryn N."/>
            <person name="Harris B."/>
            <person name="Ansorge W."/>
            <person name="Brandt P."/>
            <person name="Grivell L.A."/>
            <person name="Rieger M."/>
            <person name="Weichselgartner M."/>
            <person name="de Simone V."/>
            <person name="Obermaier B."/>
            <person name="Mache R."/>
            <person name="Mueller M."/>
            <person name="Kreis M."/>
            <person name="Delseny M."/>
            <person name="Puigdomenech P."/>
            <person name="Watson M."/>
            <person name="Schmidtheini T."/>
            <person name="Reichert B."/>
            <person name="Portetelle D."/>
            <person name="Perez-Alonso M."/>
            <person name="Boutry M."/>
            <person name="Bancroft I."/>
            <person name="Vos P."/>
            <person name="Hoheisel J."/>
            <person name="Zimmermann W."/>
            <person name="Wedler H."/>
            <person name="Ridley P."/>
            <person name="Langham S.-A."/>
            <person name="McCullagh B."/>
            <person name="Bilham L."/>
            <person name="Robben J."/>
            <person name="van der Schueren J."/>
            <person name="Grymonprez B."/>
            <person name="Chuang Y.-J."/>
            <person name="Vandenbussche F."/>
            <person name="Braeken M."/>
            <person name="Weltjens I."/>
            <person name="Voet M."/>
            <person name="Bastiaens I."/>
            <person name="Aert R."/>
            <person name="Defoor E."/>
            <person name="Weitzenegger T."/>
            <person name="Bothe G."/>
            <person name="Ramsperger U."/>
            <person name="Hilbert H."/>
            <person name="Braun M."/>
            <person name="Holzer E."/>
            <person name="Brandt A."/>
            <person name="Peters S."/>
            <person name="van Staveren M."/>
            <person name="Dirkse W."/>
            <person name="Mooijman P."/>
            <person name="Klein Lankhorst R."/>
            <person name="Rose M."/>
            <person name="Hauf J."/>
            <person name="Koetter P."/>
            <person name="Berneiser S."/>
            <person name="Hempel S."/>
            <person name="Feldpausch M."/>
            <person name="Lamberth S."/>
            <person name="Van den Daele H."/>
            <person name="De Keyser A."/>
            <person name="Buysshaert C."/>
            <person name="Gielen J."/>
            <person name="Villarroel R."/>
            <person name="De Clercq R."/>
            <person name="van Montagu M."/>
            <person name="Rogers J."/>
            <person name="Cronin A."/>
            <person name="Quail M.A."/>
            <person name="Bray-Allen S."/>
            <person name="Clark L."/>
            <person name="Doggett J."/>
            <person name="Hall S."/>
            <person name="Kay M."/>
            <person name="Lennard N."/>
            <person name="McLay K."/>
            <person name="Mayes R."/>
            <person name="Pettett A."/>
            <person name="Rajandream M.A."/>
            <person name="Lyne M."/>
            <person name="Benes V."/>
            <person name="Rechmann S."/>
            <person name="Borkova D."/>
            <person name="Bloecker H."/>
            <person name="Scharfe M."/>
            <person name="Grimm M."/>
            <person name="Loehnert T.-H."/>
            <person name="Dose S."/>
            <person name="de Haan M."/>
            <person name="Maarse A.C."/>
            <person name="Schaefer M."/>
            <person name="Mueller-Auer S."/>
            <person name="Gabel C."/>
            <person name="Fuchs M."/>
            <person name="Fartmann B."/>
            <person name="Granderath K."/>
            <person name="Dauner D."/>
            <person name="Herzl A."/>
            <person name="Neumann S."/>
            <person name="Argiriou A."/>
            <person name="Vitale D."/>
            <person name="Liguori R."/>
            <person name="Piravandi E."/>
            <person name="Massenet O."/>
            <person name="Quigley F."/>
            <person name="Clabauld G."/>
            <person name="Muendlein A."/>
            <person name="Felber R."/>
            <person name="Schnabl S."/>
            <person name="Hiller R."/>
            <person name="Schmidt W."/>
            <person name="Lecharny A."/>
            <person name="Aubourg S."/>
            <person name="Chefdor F."/>
            <person name="Cooke R."/>
            <person name="Berger C."/>
            <person name="Monfort A."/>
            <person name="Casacuberta E."/>
            <person name="Gibbons T."/>
            <person name="Weber N."/>
            <person name="Vandenbol M."/>
            <person name="Bargues M."/>
            <person name="Terol J."/>
            <person name="Torres A."/>
            <person name="Perez-Perez A."/>
            <person name="Purnelle B."/>
            <person name="Bent E."/>
            <person name="Johnson S."/>
            <person name="Tacon D."/>
            <person name="Jesse T."/>
            <person name="Heijnen L."/>
            <person name="Schwarz S."/>
            <person name="Scholler P."/>
            <person name="Heber S."/>
            <person name="Francs P."/>
            <person name="Bielke C."/>
            <person name="Frishman D."/>
            <person name="Haase D."/>
            <person name="Lemcke K."/>
            <person name="Mewes H.-W."/>
            <person name="Stocker S."/>
            <person name="Zaccaria P."/>
            <person name="Bevan M."/>
            <person name="Wilson R.K."/>
            <person name="de la Bastide M."/>
            <person name="Habermann K."/>
            <person name="Parnell L."/>
            <person name="Dedhia N."/>
            <person name="Gnoj L."/>
            <person name="Schutz K."/>
            <person name="Huang E."/>
            <person name="Spiegel L."/>
            <person name="Sekhon M."/>
            <person name="Murray J."/>
            <person name="Sheet P."/>
            <person name="Cordes M."/>
            <person name="Abu-Threideh J."/>
            <person name="Stoneking T."/>
            <person name="Kalicki J."/>
            <person name="Graves T."/>
            <person name="Harmon G."/>
            <person name="Edwards J."/>
            <person name="Latreille P."/>
            <person name="Courtney L."/>
            <person name="Cloud J."/>
            <person name="Abbott A."/>
            <person name="Scott K."/>
            <person name="Johnson D."/>
            <person name="Minx P."/>
            <person name="Bentley D."/>
            <person name="Fulton B."/>
            <person name="Miller N."/>
            <person name="Greco T."/>
            <person name="Kemp K."/>
            <person name="Kramer J."/>
            <person name="Fulton L."/>
            <person name="Mardis E."/>
            <person name="Dante M."/>
            <person name="Pepin K."/>
            <person name="Hillier L.W."/>
            <person name="Nelson J."/>
            <person name="Spieth J."/>
            <person name="Ryan E."/>
            <person name="Andrews S."/>
            <person name="Geisel C."/>
            <person name="Layman D."/>
            <person name="Du H."/>
            <person name="Ali J."/>
            <person name="Berghoff A."/>
            <person name="Jones K."/>
            <person name="Drone K."/>
            <person name="Cotton M."/>
            <person name="Joshu C."/>
            <person name="Antonoiu B."/>
            <person name="Zidanic M."/>
            <person name="Strong C."/>
            <person name="Sun H."/>
            <person name="Lamar B."/>
            <person name="Yordan C."/>
            <person name="Ma P."/>
            <person name="Zhong J."/>
            <person name="Preston R."/>
            <person name="Vil D."/>
            <person name="Shekher M."/>
            <person name="Matero A."/>
            <person name="Shah R."/>
            <person name="Swaby I.K."/>
            <person name="O'Shaughnessy A."/>
            <person name="Rodriguez M."/>
            <person name="Hoffman J."/>
            <person name="Till S."/>
            <person name="Granat S."/>
            <person name="Shohdy N."/>
            <person name="Hasegawa A."/>
            <person name="Hameed A."/>
            <person name="Lodhi M."/>
            <person name="Johnson A."/>
            <person name="Chen E."/>
            <person name="Marra M.A."/>
            <person name="Martienssen R."/>
            <person name="McCombie W.R."/>
        </authorList>
    </citation>
    <scope>NUCLEOTIDE SEQUENCE [LARGE SCALE GENOMIC DNA]</scope>
    <source>
        <strain>cv. Columbia</strain>
    </source>
</reference>
<reference key="3">
    <citation type="journal article" date="2017" name="Plant J.">
        <title>Araport11: a complete reannotation of the Arabidopsis thaliana reference genome.</title>
        <authorList>
            <person name="Cheng C.Y."/>
            <person name="Krishnakumar V."/>
            <person name="Chan A.P."/>
            <person name="Thibaud-Nissen F."/>
            <person name="Schobel S."/>
            <person name="Town C.D."/>
        </authorList>
    </citation>
    <scope>GENOME REANNOTATION</scope>
    <source>
        <strain>cv. Columbia</strain>
    </source>
</reference>
<reference key="4">
    <citation type="submission" date="2004-01" db="EMBL/GenBank/DDBJ databases">
        <authorList>
            <person name="Shinn P."/>
            <person name="Chen H."/>
            <person name="Cheuk R.F."/>
            <person name="Kim C.J."/>
            <person name="Ecker J.R."/>
        </authorList>
    </citation>
    <scope>NUCLEOTIDE SEQUENCE [LARGE SCALE MRNA]</scope>
</reference>
<comment type="subcellular location">
    <subcellularLocation>
        <location evidence="2">Plastid</location>
        <location evidence="2">Chloroplast</location>
    </subcellularLocation>
</comment>
<comment type="sequence caution" evidence="2">
    <conflict type="erroneous gene model prediction">
        <sequence resource="EMBL-CDS" id="CAB10224"/>
    </conflict>
    <text>The predicted gene At4g14450 has been split into 2 genes: At4g14450 and At4g14455.</text>
</comment>
<comment type="sequence caution" evidence="2">
    <conflict type="erroneous gene model prediction">
        <sequence resource="EMBL-CDS" id="CAB78487"/>
    </conflict>
    <text>The predicted gene At4g14450 has been split into 2 genes: At4g14450 and At4g14455.</text>
</comment>
<sequence length="125" mass="14104">MFFDTKVLNYPTIHKSISMASTMQRTSSSAASNERQLSQLQRRAPSLMIKPTSFSNWNVAIPLLSPLAPSLTSSFDQSHVPPPQNKTEIPVEEEVKKTPVFKKWQHPASPFCYEPTTFVPPFIQV</sequence>
<keyword id="KW-0150">Chloroplast</keyword>
<keyword id="KW-0934">Plastid</keyword>
<keyword id="KW-1185">Reference proteome</keyword>
<keyword id="KW-0809">Transit peptide</keyword>
<feature type="transit peptide" description="Chloroplast" evidence="1">
    <location>
        <begin position="1"/>
        <end position="46"/>
    </location>
</feature>
<feature type="chain" id="PRO_0000223690" description="Uncharacterized protein At4g14450, chloroplastic">
    <location>
        <begin position="47"/>
        <end position="125"/>
    </location>
</feature>
<dbReference type="EMBL" id="Z97336">
    <property type="protein sequence ID" value="CAB10224.1"/>
    <property type="status" value="ALT_SEQ"/>
    <property type="molecule type" value="Genomic_DNA"/>
</dbReference>
<dbReference type="EMBL" id="AL161539">
    <property type="protein sequence ID" value="CAB78487.1"/>
    <property type="status" value="ALT_SEQ"/>
    <property type="molecule type" value="Genomic_DNA"/>
</dbReference>
<dbReference type="EMBL" id="CP002687">
    <property type="protein sequence ID" value="AEE83446.1"/>
    <property type="molecule type" value="Genomic_DNA"/>
</dbReference>
<dbReference type="EMBL" id="BT011499">
    <property type="protein sequence ID" value="AAS00339.1"/>
    <property type="molecule type" value="mRNA"/>
</dbReference>
<dbReference type="EMBL" id="BT010915">
    <property type="protein sequence ID" value="AAR24693.1"/>
    <property type="molecule type" value="mRNA"/>
</dbReference>
<dbReference type="RefSeq" id="NP_193181.3">
    <property type="nucleotide sequence ID" value="NM_117524.6"/>
</dbReference>
<dbReference type="STRING" id="3702.Q6NN02"/>
<dbReference type="PaxDb" id="3702-AT4G14450.1"/>
<dbReference type="EnsemblPlants" id="AT4G14450.1">
    <property type="protein sequence ID" value="AT4G14450.1"/>
    <property type="gene ID" value="AT4G14450"/>
</dbReference>
<dbReference type="GeneID" id="827090"/>
<dbReference type="Gramene" id="AT4G14450.1">
    <property type="protein sequence ID" value="AT4G14450.1"/>
    <property type="gene ID" value="AT4G14450"/>
</dbReference>
<dbReference type="KEGG" id="ath:AT4G14450"/>
<dbReference type="Araport" id="AT4G14450"/>
<dbReference type="TAIR" id="AT4G14450">
    <property type="gene designation" value="PH1"/>
</dbReference>
<dbReference type="eggNOG" id="ENOG502S77P">
    <property type="taxonomic scope" value="Eukaryota"/>
</dbReference>
<dbReference type="HOGENOM" id="CLU_2255122_0_0_1"/>
<dbReference type="InParanoid" id="Q6NN02"/>
<dbReference type="OMA" id="HPAGPIY"/>
<dbReference type="PhylomeDB" id="Q6NN02"/>
<dbReference type="PRO" id="PR:Q6NN02"/>
<dbReference type="Proteomes" id="UP000006548">
    <property type="component" value="Chromosome 4"/>
</dbReference>
<dbReference type="ExpressionAtlas" id="Q6NN02">
    <property type="expression patterns" value="baseline and differential"/>
</dbReference>
<dbReference type="GO" id="GO:0009507">
    <property type="term" value="C:chloroplast"/>
    <property type="evidence" value="ECO:0007669"/>
    <property type="project" value="UniProtKB-SubCell"/>
</dbReference>
<dbReference type="GO" id="GO:0005737">
    <property type="term" value="C:cytoplasm"/>
    <property type="evidence" value="ECO:0000314"/>
    <property type="project" value="TAIR"/>
</dbReference>
<dbReference type="GO" id="GO:0005634">
    <property type="term" value="C:nucleus"/>
    <property type="evidence" value="ECO:0000314"/>
    <property type="project" value="TAIR"/>
</dbReference>
<dbReference type="InterPro" id="IPR040381">
    <property type="entry name" value="At4g14450-like"/>
</dbReference>
<dbReference type="PANTHER" id="PTHR33912:SF11">
    <property type="entry name" value="(RAPE) HYPOTHETICAL PROTEIN"/>
    <property type="match status" value="1"/>
</dbReference>
<dbReference type="PANTHER" id="PTHR33912">
    <property type="entry name" value="OS01G0939400 PROTEIN"/>
    <property type="match status" value="1"/>
</dbReference>
<protein>
    <recommendedName>
        <fullName>Uncharacterized protein At4g14450, chloroplastic</fullName>
    </recommendedName>
</protein>
<organism>
    <name type="scientific">Arabidopsis thaliana</name>
    <name type="common">Mouse-ear cress</name>
    <dbReference type="NCBI Taxonomy" id="3702"/>
    <lineage>
        <taxon>Eukaryota</taxon>
        <taxon>Viridiplantae</taxon>
        <taxon>Streptophyta</taxon>
        <taxon>Embryophyta</taxon>
        <taxon>Tracheophyta</taxon>
        <taxon>Spermatophyta</taxon>
        <taxon>Magnoliopsida</taxon>
        <taxon>eudicotyledons</taxon>
        <taxon>Gunneridae</taxon>
        <taxon>Pentapetalae</taxon>
        <taxon>rosids</taxon>
        <taxon>malvids</taxon>
        <taxon>Brassicales</taxon>
        <taxon>Brassicaceae</taxon>
        <taxon>Camelineae</taxon>
        <taxon>Arabidopsis</taxon>
    </lineage>
</organism>
<accession>Q6NN02</accession>